<gene>
    <name evidence="1" type="primary">rplC</name>
    <name type="ordered locus">PFLU_5527</name>
</gene>
<sequence>MTIGVVGRKCGMTRIFTEEGVSIPVTVIEIEPNRVTQFKTEETDGYRAVQVTVGERRASRVTAAQAGHFAKANVAAGRTVMEFRLEDGDYQAGDLINAEIFAAGQLVDVTGQSKGKGFQGTIKRWNFRGQDNTHGNSVSHRVPGSIGQCQTPGRVFKGKKMSGHMGAERVTVQSLEVVRVDAERNLLLVKGAVPGATGGNLVVRPAAKARG</sequence>
<reference key="1">
    <citation type="journal article" date="2009" name="Genome Biol.">
        <title>Genomic and genetic analyses of diversity and plant interactions of Pseudomonas fluorescens.</title>
        <authorList>
            <person name="Silby M.W."/>
            <person name="Cerdeno-Tarraga A.M."/>
            <person name="Vernikos G.S."/>
            <person name="Giddens S.R."/>
            <person name="Jackson R.W."/>
            <person name="Preston G.M."/>
            <person name="Zhang X.-X."/>
            <person name="Moon C.D."/>
            <person name="Gehrig S.M."/>
            <person name="Godfrey S.A.C."/>
            <person name="Knight C.G."/>
            <person name="Malone J.G."/>
            <person name="Robinson Z."/>
            <person name="Spiers A.J."/>
            <person name="Harris S."/>
            <person name="Challis G.L."/>
            <person name="Yaxley A.M."/>
            <person name="Harris D."/>
            <person name="Seeger K."/>
            <person name="Murphy L."/>
            <person name="Rutter S."/>
            <person name="Squares R."/>
            <person name="Quail M.A."/>
            <person name="Saunders E."/>
            <person name="Mavromatis K."/>
            <person name="Brettin T.S."/>
            <person name="Bentley S.D."/>
            <person name="Hothersall J."/>
            <person name="Stephens E."/>
            <person name="Thomas C.M."/>
            <person name="Parkhill J."/>
            <person name="Levy S.B."/>
            <person name="Rainey P.B."/>
            <person name="Thomson N.R."/>
        </authorList>
    </citation>
    <scope>NUCLEOTIDE SEQUENCE [LARGE SCALE GENOMIC DNA]</scope>
    <source>
        <strain>SBW25</strain>
    </source>
</reference>
<protein>
    <recommendedName>
        <fullName evidence="1">Large ribosomal subunit protein uL3</fullName>
    </recommendedName>
    <alternativeName>
        <fullName evidence="2">50S ribosomal protein L3</fullName>
    </alternativeName>
</protein>
<proteinExistence type="inferred from homology"/>
<evidence type="ECO:0000255" key="1">
    <source>
        <dbReference type="HAMAP-Rule" id="MF_01325"/>
    </source>
</evidence>
<evidence type="ECO:0000305" key="2"/>
<feature type="chain" id="PRO_1000214516" description="Large ribosomal subunit protein uL3">
    <location>
        <begin position="1"/>
        <end position="211"/>
    </location>
</feature>
<feature type="modified residue" description="N5-methylglutamine" evidence="1">
    <location>
        <position position="150"/>
    </location>
</feature>
<keyword id="KW-0488">Methylation</keyword>
<keyword id="KW-0687">Ribonucleoprotein</keyword>
<keyword id="KW-0689">Ribosomal protein</keyword>
<keyword id="KW-0694">RNA-binding</keyword>
<keyword id="KW-0699">rRNA-binding</keyword>
<organism>
    <name type="scientific">Pseudomonas fluorescens (strain SBW25)</name>
    <dbReference type="NCBI Taxonomy" id="216595"/>
    <lineage>
        <taxon>Bacteria</taxon>
        <taxon>Pseudomonadati</taxon>
        <taxon>Pseudomonadota</taxon>
        <taxon>Gammaproteobacteria</taxon>
        <taxon>Pseudomonadales</taxon>
        <taxon>Pseudomonadaceae</taxon>
        <taxon>Pseudomonas</taxon>
    </lineage>
</organism>
<accession>C3K2X6</accession>
<name>RL3_PSEFS</name>
<dbReference type="EMBL" id="AM181176">
    <property type="protein sequence ID" value="CAY52766.1"/>
    <property type="molecule type" value="Genomic_DNA"/>
</dbReference>
<dbReference type="RefSeq" id="WP_003194649.1">
    <property type="nucleotide sequence ID" value="NC_012660.1"/>
</dbReference>
<dbReference type="SMR" id="C3K2X6"/>
<dbReference type="STRING" id="294.SRM1_05179"/>
<dbReference type="GeneID" id="97919462"/>
<dbReference type="eggNOG" id="COG0087">
    <property type="taxonomic scope" value="Bacteria"/>
</dbReference>
<dbReference type="HOGENOM" id="CLU_044142_4_1_6"/>
<dbReference type="OrthoDB" id="9806135at2"/>
<dbReference type="GO" id="GO:0022625">
    <property type="term" value="C:cytosolic large ribosomal subunit"/>
    <property type="evidence" value="ECO:0007669"/>
    <property type="project" value="TreeGrafter"/>
</dbReference>
<dbReference type="GO" id="GO:0019843">
    <property type="term" value="F:rRNA binding"/>
    <property type="evidence" value="ECO:0007669"/>
    <property type="project" value="UniProtKB-UniRule"/>
</dbReference>
<dbReference type="GO" id="GO:0003735">
    <property type="term" value="F:structural constituent of ribosome"/>
    <property type="evidence" value="ECO:0007669"/>
    <property type="project" value="InterPro"/>
</dbReference>
<dbReference type="GO" id="GO:0006412">
    <property type="term" value="P:translation"/>
    <property type="evidence" value="ECO:0007669"/>
    <property type="project" value="UniProtKB-UniRule"/>
</dbReference>
<dbReference type="FunFam" id="2.40.30.10:FF:000004">
    <property type="entry name" value="50S ribosomal protein L3"/>
    <property type="match status" value="1"/>
</dbReference>
<dbReference type="FunFam" id="3.30.160.810:FF:000001">
    <property type="entry name" value="50S ribosomal protein L3"/>
    <property type="match status" value="1"/>
</dbReference>
<dbReference type="Gene3D" id="3.30.160.810">
    <property type="match status" value="1"/>
</dbReference>
<dbReference type="Gene3D" id="2.40.30.10">
    <property type="entry name" value="Translation factors"/>
    <property type="match status" value="1"/>
</dbReference>
<dbReference type="HAMAP" id="MF_01325_B">
    <property type="entry name" value="Ribosomal_uL3_B"/>
    <property type="match status" value="1"/>
</dbReference>
<dbReference type="InterPro" id="IPR000597">
    <property type="entry name" value="Ribosomal_uL3"/>
</dbReference>
<dbReference type="InterPro" id="IPR019927">
    <property type="entry name" value="Ribosomal_uL3_bac/org-type"/>
</dbReference>
<dbReference type="InterPro" id="IPR019926">
    <property type="entry name" value="Ribosomal_uL3_CS"/>
</dbReference>
<dbReference type="InterPro" id="IPR009000">
    <property type="entry name" value="Transl_B-barrel_sf"/>
</dbReference>
<dbReference type="NCBIfam" id="TIGR03625">
    <property type="entry name" value="L3_bact"/>
    <property type="match status" value="1"/>
</dbReference>
<dbReference type="PANTHER" id="PTHR11229">
    <property type="entry name" value="50S RIBOSOMAL PROTEIN L3"/>
    <property type="match status" value="1"/>
</dbReference>
<dbReference type="PANTHER" id="PTHR11229:SF16">
    <property type="entry name" value="LARGE RIBOSOMAL SUBUNIT PROTEIN UL3C"/>
    <property type="match status" value="1"/>
</dbReference>
<dbReference type="Pfam" id="PF00297">
    <property type="entry name" value="Ribosomal_L3"/>
    <property type="match status" value="1"/>
</dbReference>
<dbReference type="SUPFAM" id="SSF50447">
    <property type="entry name" value="Translation proteins"/>
    <property type="match status" value="1"/>
</dbReference>
<dbReference type="PROSITE" id="PS00474">
    <property type="entry name" value="RIBOSOMAL_L3"/>
    <property type="match status" value="1"/>
</dbReference>
<comment type="function">
    <text evidence="1">One of the primary rRNA binding proteins, it binds directly near the 3'-end of the 23S rRNA, where it nucleates assembly of the 50S subunit.</text>
</comment>
<comment type="subunit">
    <text evidence="1">Part of the 50S ribosomal subunit. Forms a cluster with proteins L14 and L19.</text>
</comment>
<comment type="PTM">
    <text evidence="1">Methylated by PrmB.</text>
</comment>
<comment type="similarity">
    <text evidence="1">Belongs to the universal ribosomal protein uL3 family.</text>
</comment>